<accession>Q6A1G3</accession>
<name>OFUT3_XENTR</name>
<protein>
    <recommendedName>
        <fullName>GDP-fucose protein O-fucosyltransferase 3</fullName>
        <ecNumber evidence="2">2.4.1.221</ecNumber>
    </recommendedName>
    <alternativeName>
        <fullName>Fucosyltransferase X</fullName>
        <shortName>Fuc-TX</shortName>
        <shortName>FucT-X</shortName>
    </alternativeName>
    <alternativeName>
        <fullName>Galactoside 3-L-fucosyltransferase 10</fullName>
        <shortName>Fucosyltransferase 10</shortName>
    </alternativeName>
</protein>
<keyword id="KW-1015">Disulfide bond</keyword>
<keyword id="KW-0256">Endoplasmic reticulum</keyword>
<keyword id="KW-0325">Glycoprotein</keyword>
<keyword id="KW-0328">Glycosyltransferase</keyword>
<keyword id="KW-0472">Membrane</keyword>
<keyword id="KW-1185">Reference proteome</keyword>
<keyword id="KW-0735">Signal-anchor</keyword>
<keyword id="KW-0808">Transferase</keyword>
<keyword id="KW-0812">Transmembrane</keyword>
<keyword id="KW-1133">Transmembrane helix</keyword>
<proteinExistence type="evidence at transcript level"/>
<dbReference type="EC" id="2.4.1.221" evidence="2"/>
<dbReference type="EMBL" id="AJ784815">
    <property type="protein sequence ID" value="CAH04944.1"/>
    <property type="molecule type" value="mRNA"/>
</dbReference>
<dbReference type="RefSeq" id="NP_001002903.1">
    <property type="nucleotide sequence ID" value="NM_001002903.1"/>
</dbReference>
<dbReference type="SMR" id="Q6A1G3"/>
<dbReference type="FunCoup" id="Q6A1G3">
    <property type="interactions" value="1156"/>
</dbReference>
<dbReference type="CAZy" id="GT10">
    <property type="family name" value="Glycosyltransferase Family 10"/>
</dbReference>
<dbReference type="GlyCosmos" id="Q6A1G3">
    <property type="glycosylation" value="5 sites, No reported glycans"/>
</dbReference>
<dbReference type="PaxDb" id="8364-ENSXETP00000038017"/>
<dbReference type="GeneID" id="444886"/>
<dbReference type="KEGG" id="xtr:444886"/>
<dbReference type="AGR" id="Xenbase:XB-GENE-976919"/>
<dbReference type="CTD" id="84750"/>
<dbReference type="Xenbase" id="XB-GENE-976919">
    <property type="gene designation" value="fut10"/>
</dbReference>
<dbReference type="eggNOG" id="KOG2619">
    <property type="taxonomic scope" value="Eukaryota"/>
</dbReference>
<dbReference type="InParanoid" id="Q6A1G3"/>
<dbReference type="OrthoDB" id="9993460at2759"/>
<dbReference type="Reactome" id="R-XTR-9037629">
    <property type="pathway name" value="Lewis blood group biosynthesis"/>
</dbReference>
<dbReference type="UniPathway" id="UPA00378"/>
<dbReference type="Proteomes" id="UP000008143">
    <property type="component" value="Chromosome 1"/>
</dbReference>
<dbReference type="GO" id="GO:0005783">
    <property type="term" value="C:endoplasmic reticulum"/>
    <property type="evidence" value="ECO:0000250"/>
    <property type="project" value="UniProtKB"/>
</dbReference>
<dbReference type="GO" id="GO:0005789">
    <property type="term" value="C:endoplasmic reticulum membrane"/>
    <property type="evidence" value="ECO:0007669"/>
    <property type="project" value="UniProtKB-SubCell"/>
</dbReference>
<dbReference type="GO" id="GO:0000139">
    <property type="term" value="C:Golgi membrane"/>
    <property type="evidence" value="ECO:0007669"/>
    <property type="project" value="InterPro"/>
</dbReference>
<dbReference type="GO" id="GO:0046920">
    <property type="term" value="F:alpha-(1-&gt;3)-fucosyltransferase activity"/>
    <property type="evidence" value="ECO:0007669"/>
    <property type="project" value="InterPro"/>
</dbReference>
<dbReference type="GO" id="GO:0046922">
    <property type="term" value="F:peptide-O-fucosyltransferase activity"/>
    <property type="evidence" value="ECO:0000250"/>
    <property type="project" value="UniProtKB"/>
</dbReference>
<dbReference type="GO" id="GO:0050714">
    <property type="term" value="P:positive regulation of protein secretion"/>
    <property type="evidence" value="ECO:0000250"/>
    <property type="project" value="UniProtKB"/>
</dbReference>
<dbReference type="FunFam" id="3.40.50.11660:FF:000002">
    <property type="entry name" value="Alpha-(1,3)-fucosyltransferase"/>
    <property type="match status" value="1"/>
</dbReference>
<dbReference type="Gene3D" id="3.40.50.11660">
    <property type="entry name" value="Glycosyl transferase family 10, C-terminal domain"/>
    <property type="match status" value="1"/>
</dbReference>
<dbReference type="InterPro" id="IPR017176">
    <property type="entry name" value="Alpha-1_3-FUT_met"/>
</dbReference>
<dbReference type="InterPro" id="IPR055270">
    <property type="entry name" value="Glyco_tran_10_C"/>
</dbReference>
<dbReference type="InterPro" id="IPR031481">
    <property type="entry name" value="Glyco_tran_10_N"/>
</dbReference>
<dbReference type="InterPro" id="IPR001503">
    <property type="entry name" value="Glyco_trans_10"/>
</dbReference>
<dbReference type="InterPro" id="IPR038577">
    <property type="entry name" value="GT10-like_C_sf"/>
</dbReference>
<dbReference type="PANTHER" id="PTHR11929">
    <property type="entry name" value="ALPHA- 1,3 -FUCOSYLTRANSFERASE"/>
    <property type="match status" value="1"/>
</dbReference>
<dbReference type="PANTHER" id="PTHR11929:SF194">
    <property type="entry name" value="ALPHA-(1,3)-FUCOSYLTRANSFERASE 10"/>
    <property type="match status" value="1"/>
</dbReference>
<dbReference type="Pfam" id="PF17039">
    <property type="entry name" value="Glyco_tran_10_N"/>
    <property type="match status" value="1"/>
</dbReference>
<dbReference type="Pfam" id="PF00852">
    <property type="entry name" value="Glyco_transf_10"/>
    <property type="match status" value="1"/>
</dbReference>
<dbReference type="PIRSF" id="PIRSF037332">
    <property type="entry name" value="Alpha1_3FUT_met"/>
    <property type="match status" value="1"/>
</dbReference>
<dbReference type="SUPFAM" id="SSF53756">
    <property type="entry name" value="UDP-Glycosyltransferase/glycogen phosphorylase"/>
    <property type="match status" value="1"/>
</dbReference>
<evidence type="ECO:0000250" key="1">
    <source>
        <dbReference type="UniProtKB" id="Q11130"/>
    </source>
</evidence>
<evidence type="ECO:0000250" key="2">
    <source>
        <dbReference type="UniProtKB" id="Q6P4F1"/>
    </source>
</evidence>
<evidence type="ECO:0000255" key="3"/>
<evidence type="ECO:0000305" key="4"/>
<reference key="1">
    <citation type="submission" date="2004-07" db="EMBL/GenBank/DDBJ databases">
        <title>Phylogeny of fucosyltransferases.</title>
        <authorList>
            <person name="Martinez-Duncker I."/>
            <person name="Oriol R."/>
            <person name="Mollicone R."/>
        </authorList>
    </citation>
    <scope>NUCLEOTIDE SEQUENCE [MRNA]</scope>
</reference>
<comment type="function">
    <text evidence="2">Protein O-fucosyltransferase that specifically catalyzes O-fucosylation of serine or threonine residues in EMI domains of target proteins. Attaches fucose through an O-glycosidic linkage. O-fucosylation of EMI domain-containing proteins may be required for facilitating protein folding and secretion.</text>
</comment>
<comment type="catalytic activity">
    <reaction evidence="2">
        <text>L-threonyl-[protein] + GDP-beta-L-fucose = 3-O-(alpha-L-fucosyl)-L-threonyl-[protein] + GDP + H(+)</text>
        <dbReference type="Rhea" id="RHEA:70491"/>
        <dbReference type="Rhea" id="RHEA-COMP:11060"/>
        <dbReference type="Rhea" id="RHEA-COMP:17915"/>
        <dbReference type="ChEBI" id="CHEBI:15378"/>
        <dbReference type="ChEBI" id="CHEBI:30013"/>
        <dbReference type="ChEBI" id="CHEBI:57273"/>
        <dbReference type="ChEBI" id="CHEBI:58189"/>
        <dbReference type="ChEBI" id="CHEBI:189631"/>
        <dbReference type="EC" id="2.4.1.221"/>
    </reaction>
    <physiologicalReaction direction="left-to-right" evidence="2">
        <dbReference type="Rhea" id="RHEA:70492"/>
    </physiologicalReaction>
</comment>
<comment type="catalytic activity">
    <reaction evidence="2">
        <text>L-seryl-[protein] + GDP-beta-L-fucose = 3-O-(alpha-L-fucosyl)-L-seryl-[protein] + GDP + H(+)</text>
        <dbReference type="Rhea" id="RHEA:63644"/>
        <dbReference type="Rhea" id="RHEA-COMP:9863"/>
        <dbReference type="Rhea" id="RHEA-COMP:17914"/>
        <dbReference type="ChEBI" id="CHEBI:15378"/>
        <dbReference type="ChEBI" id="CHEBI:29999"/>
        <dbReference type="ChEBI" id="CHEBI:57273"/>
        <dbReference type="ChEBI" id="CHEBI:58189"/>
        <dbReference type="ChEBI" id="CHEBI:189632"/>
        <dbReference type="EC" id="2.4.1.221"/>
    </reaction>
    <physiologicalReaction direction="left-to-right" evidence="2">
        <dbReference type="Rhea" id="RHEA:63645"/>
    </physiologicalReaction>
</comment>
<comment type="pathway">
    <text evidence="2">Protein modification; protein glycosylation.</text>
</comment>
<comment type="subcellular location">
    <subcellularLocation>
        <location evidence="2">Endoplasmic reticulum membrane</location>
        <topology evidence="3">Single-pass type II membrane protein</topology>
    </subcellularLocation>
</comment>
<comment type="similarity">
    <text evidence="4">Belongs to the glycosyltransferase 10 family.</text>
</comment>
<feature type="chain" id="PRO_0000299008" description="GDP-fucose protein O-fucosyltransferase 3">
    <location>
        <begin position="1"/>
        <end position="471"/>
    </location>
</feature>
<feature type="topological domain" description="Cytoplasmic" evidence="3">
    <location>
        <begin position="1"/>
        <end position="8"/>
    </location>
</feature>
<feature type="transmembrane region" description="Helical; Signal-anchor for type II membrane protein" evidence="3">
    <location>
        <begin position="9"/>
        <end position="29"/>
    </location>
</feature>
<feature type="topological domain" description="Lumenal" evidence="3">
    <location>
        <begin position="30"/>
        <end position="471"/>
    </location>
</feature>
<feature type="glycosylation site" description="N-linked (GlcNAc...) asparagine" evidence="3">
    <location>
        <position position="102"/>
    </location>
</feature>
<feature type="glycosylation site" description="N-linked (GlcNAc...) asparagine" evidence="3">
    <location>
        <position position="122"/>
    </location>
</feature>
<feature type="glycosylation site" description="N-linked (GlcNAc...) asparagine" evidence="3">
    <location>
        <position position="160"/>
    </location>
</feature>
<feature type="glycosylation site" description="N-linked (GlcNAc...) asparagine" evidence="3">
    <location>
        <position position="310"/>
    </location>
</feature>
<feature type="glycosylation site" description="N-linked (GlcNAc...) asparagine" evidence="3">
    <location>
        <position position="457"/>
    </location>
</feature>
<feature type="disulfide bond" evidence="1">
    <location>
        <begin position="381"/>
        <end position="384"/>
    </location>
</feature>
<gene>
    <name type="primary">fut10</name>
    <name evidence="2" type="synonym">pofut3</name>
</gene>
<organism>
    <name type="scientific">Xenopus tropicalis</name>
    <name type="common">Western clawed frog</name>
    <name type="synonym">Silurana tropicalis</name>
    <dbReference type="NCBI Taxonomy" id="8364"/>
    <lineage>
        <taxon>Eukaryota</taxon>
        <taxon>Metazoa</taxon>
        <taxon>Chordata</taxon>
        <taxon>Craniata</taxon>
        <taxon>Vertebrata</taxon>
        <taxon>Euteleostomi</taxon>
        <taxon>Amphibia</taxon>
        <taxon>Batrachia</taxon>
        <taxon>Anura</taxon>
        <taxon>Pipoidea</taxon>
        <taxon>Pipidae</taxon>
        <taxon>Xenopodinae</taxon>
        <taxon>Xenopus</taxon>
        <taxon>Silurana</taxon>
    </lineage>
</organism>
<sequence length="471" mass="55618">MNRMWEKKFWISCFFIILFFILVTLQVMVELGRFEKRETKSFTVIDIKEQKKPLLKHIKEKSNSRLRHLKDNYPIMLWWSPLTGENGRLGQCGTDTCFFTINRTYLQDPMTKAILFYGTDFNMTSLPLPREISHEWALFHEESPKNNYKLFHEPAITLFNHTATFSRHSHLPLTSQYLEGLQALRSKEYLISIQKKNFLRKRLAPLAYVQSDCDPPSDRDSYVQELMKYIAVDSYGECLHNRDLPQQVNNPSSMDDSQFHHILAQYKFILAFENAVCEDYITEKLWRPLKLGAVPVYFGAPNVENWLPSNKSAIIVGRFSHPKELATYIKKLDKNDKLYMQFIEWKLHGNINNKHLLSTITERKWGVQDVTQDNYIDAFECMICKRVWENVRLKDRVSTTKLWNAESLHLNCPAPEAFSFLPGHLLKSSMREMWKPSFEQSKKEAKALRTLVDRNRNFTTVEFWNLVFKFQ</sequence>